<organism>
    <name type="scientific">Chrysiogenes arsenatis</name>
    <dbReference type="NCBI Taxonomy" id="309797"/>
    <lineage>
        <taxon>Bacteria</taxon>
        <taxon>Pseudomonadati</taxon>
        <taxon>Chrysiogenota</taxon>
        <taxon>Chrysiogenia</taxon>
        <taxon>Chrysiogenales</taxon>
        <taxon>Chrysiogenaceae</taxon>
        <taxon>Chrysiogenes</taxon>
    </lineage>
</organism>
<accession>P0DW32</accession>
<protein>
    <recommendedName>
        <fullName evidence="4">Arsenate respiratory reductase iron-sulfur subunit ArrB</fullName>
    </recommendedName>
    <alternativeName>
        <fullName evidence="4">Arsenate respiratory reductase small subunit</fullName>
        <shortName evidence="4">ARR small subunit</shortName>
    </alternativeName>
</protein>
<evidence type="ECO:0000250" key="1">
    <source>
        <dbReference type="UniProtKB" id="Q7WTT9"/>
    </source>
</evidence>
<evidence type="ECO:0000269" key="2">
    <source>
    </source>
</evidence>
<evidence type="ECO:0000303" key="3">
    <source>
    </source>
</evidence>
<evidence type="ECO:0000305" key="4"/>
<evidence type="ECO:0000305" key="5">
    <source>
    </source>
</evidence>
<reference key="1">
    <citation type="journal article" date="1998" name="Eur. J. Biochem.">
        <title>Purification and characterization of the respiratory arsenate reductase of Chrysiogenes arsenatis.</title>
        <authorList>
            <person name="Krafft T."/>
            <person name="Macy J.M."/>
        </authorList>
    </citation>
    <scope>PROTEIN SEQUENCE</scope>
    <scope>FUNCTION</scope>
    <scope>COFACTOR</scope>
    <scope>BIOPHYSICOCHEMICAL PROPERTIES</scope>
    <scope>SUBUNIT</scope>
    <scope>SUBCELLULAR LOCATION</scope>
    <scope>INDUCTION</scope>
</reference>
<feature type="chain" id="PRO_0000456240" description="Arsenate respiratory reductase iron-sulfur subunit ArrB">
    <location>
        <begin position="1"/>
        <end position="30" status="greater than"/>
    </location>
</feature>
<feature type="binding site" evidence="1">
    <location>
        <position position="12"/>
    </location>
    <ligand>
        <name>[4Fe-4S] cluster</name>
        <dbReference type="ChEBI" id="CHEBI:49883"/>
        <label>1</label>
    </ligand>
</feature>
<feature type="binding site" evidence="1">
    <location>
        <position position="15"/>
    </location>
    <ligand>
        <name>[4Fe-4S] cluster</name>
        <dbReference type="ChEBI" id="CHEBI:49883"/>
        <label>1</label>
    </ligand>
</feature>
<feature type="binding site" evidence="1">
    <location>
        <position position="18"/>
    </location>
    <ligand>
        <name>[4Fe-4S] cluster</name>
        <dbReference type="ChEBI" id="CHEBI:49883"/>
        <label>1</label>
    </ligand>
</feature>
<feature type="binding site" evidence="1">
    <location>
        <position position="22"/>
    </location>
    <ligand>
        <name>[4Fe-4S] cluster</name>
        <dbReference type="ChEBI" id="CHEBI:49883"/>
        <label>2</label>
    </ligand>
</feature>
<feature type="non-terminal residue" evidence="5">
    <location>
        <position position="30"/>
    </location>
</feature>
<sequence>AKYGMAIDLHKCAGCGACGLACKTQNNTDD</sequence>
<dbReference type="SMR" id="P0DW32"/>
<dbReference type="GO" id="GO:0042597">
    <property type="term" value="C:periplasmic space"/>
    <property type="evidence" value="ECO:0007669"/>
    <property type="project" value="UniProtKB-SubCell"/>
</dbReference>
<dbReference type="GO" id="GO:0051539">
    <property type="term" value="F:4 iron, 4 sulfur cluster binding"/>
    <property type="evidence" value="ECO:0007669"/>
    <property type="project" value="UniProtKB-KW"/>
</dbReference>
<dbReference type="GO" id="GO:0046872">
    <property type="term" value="F:metal ion binding"/>
    <property type="evidence" value="ECO:0007669"/>
    <property type="project" value="UniProtKB-KW"/>
</dbReference>
<dbReference type="Gene3D" id="3.30.70.20">
    <property type="match status" value="1"/>
</dbReference>
<dbReference type="InterPro" id="IPR017896">
    <property type="entry name" value="4Fe4S_Fe-S-bd"/>
</dbReference>
<dbReference type="Pfam" id="PF00037">
    <property type="entry name" value="Fer4"/>
    <property type="match status" value="1"/>
</dbReference>
<dbReference type="SUPFAM" id="SSF54862">
    <property type="entry name" value="4Fe-4S ferredoxins"/>
    <property type="match status" value="1"/>
</dbReference>
<dbReference type="PROSITE" id="PS51379">
    <property type="entry name" value="4FE4S_FER_2"/>
    <property type="match status" value="1"/>
</dbReference>
<proteinExistence type="evidence at protein level"/>
<comment type="function">
    <text evidence="1 2">Component of the arsenate respiratory reductase (Arr) complex, which catalyzes the reduction of arsenate (As(V)) to arsenite (As(III)) (PubMed:9738904). ArrB is probably the electron transfer subunit (By similarity).</text>
</comment>
<comment type="cofactor">
    <cofactor evidence="5">
        <name>[4Fe-4S] cluster</name>
        <dbReference type="ChEBI" id="CHEBI:49883"/>
    </cofactor>
    <text evidence="1">Binds 4 [4Fe-4S] cluster.</text>
</comment>
<comment type="biophysicochemical properties">
    <kinetics>
        <Vmax evidence="2">7013.0 umol/min/mg enzyme</Vmax>
    </kinetics>
</comment>
<comment type="subunit">
    <text evidence="2">Heterodimer composed of one large subunit (ArrA) and one small subunit (ArrB).</text>
</comment>
<comment type="subcellular location">
    <subcellularLocation>
        <location evidence="2">Periplasm</location>
    </subcellularLocation>
</comment>
<comment type="induction">
    <text evidence="2">Fully induced in the presence of arsenate.</text>
</comment>
<comment type="miscellaneous">
    <text evidence="2">May also use zinc as a cofactor.</text>
</comment>
<gene>
    <name evidence="3" type="primary">arrB</name>
</gene>
<name>ARRB_CHRAT</name>
<keyword id="KW-0004">4Fe-4S</keyword>
<keyword id="KW-0903">Direct protein sequencing</keyword>
<keyword id="KW-0249">Electron transport</keyword>
<keyword id="KW-0408">Iron</keyword>
<keyword id="KW-0411">Iron-sulfur</keyword>
<keyword id="KW-0479">Metal-binding</keyword>
<keyword id="KW-0574">Periplasm</keyword>
<keyword id="KW-0813">Transport</keyword>